<evidence type="ECO:0000255" key="1">
    <source>
        <dbReference type="HAMAP-Rule" id="MF_01350"/>
    </source>
</evidence>
<keyword id="KW-0997">Cell inner membrane</keyword>
<keyword id="KW-1003">Cell membrane</keyword>
<keyword id="KW-0472">Membrane</keyword>
<keyword id="KW-0520">NAD</keyword>
<keyword id="KW-0874">Quinone</keyword>
<keyword id="KW-1185">Reference proteome</keyword>
<keyword id="KW-1278">Translocase</keyword>
<keyword id="KW-0812">Transmembrane</keyword>
<keyword id="KW-1133">Transmembrane helix</keyword>
<keyword id="KW-0830">Ubiquinone</keyword>
<accession>A5CFN5</accession>
<comment type="function">
    <text evidence="1">NDH-1 shuttles electrons from NADH, via FMN and iron-sulfur (Fe-S) centers, to quinones in the respiratory chain. The immediate electron acceptor for the enzyme in this species is believed to be ubiquinone. Couples the redox reaction to proton translocation (for every two electrons transferred, four hydrogen ions are translocated across the cytoplasmic membrane), and thus conserves the redox energy in a proton gradient. This subunit may bind ubiquinone.</text>
</comment>
<comment type="catalytic activity">
    <reaction evidence="1">
        <text>a quinone + NADH + 5 H(+)(in) = a quinol + NAD(+) + 4 H(+)(out)</text>
        <dbReference type="Rhea" id="RHEA:57888"/>
        <dbReference type="ChEBI" id="CHEBI:15378"/>
        <dbReference type="ChEBI" id="CHEBI:24646"/>
        <dbReference type="ChEBI" id="CHEBI:57540"/>
        <dbReference type="ChEBI" id="CHEBI:57945"/>
        <dbReference type="ChEBI" id="CHEBI:132124"/>
    </reaction>
</comment>
<comment type="subunit">
    <text evidence="1">NDH-1 is composed of 14 different subunits. Subunits NuoA, H, J, K, L, M, N constitute the membrane sector of the complex.</text>
</comment>
<comment type="subcellular location">
    <subcellularLocation>
        <location evidence="1">Cell inner membrane</location>
        <topology evidence="1">Multi-pass membrane protein</topology>
    </subcellularLocation>
</comment>
<comment type="similarity">
    <text evidence="1">Belongs to the complex I subunit 1 family.</text>
</comment>
<organism>
    <name type="scientific">Orientia tsutsugamushi (strain Boryong)</name>
    <name type="common">Rickettsia tsutsugamushi</name>
    <dbReference type="NCBI Taxonomy" id="357244"/>
    <lineage>
        <taxon>Bacteria</taxon>
        <taxon>Pseudomonadati</taxon>
        <taxon>Pseudomonadota</taxon>
        <taxon>Alphaproteobacteria</taxon>
        <taxon>Rickettsiales</taxon>
        <taxon>Rickettsiaceae</taxon>
        <taxon>Rickettsieae</taxon>
        <taxon>Orientia</taxon>
    </lineage>
</organism>
<name>NUOH_ORITB</name>
<reference key="1">
    <citation type="journal article" date="2007" name="Proc. Natl. Acad. Sci. U.S.A.">
        <title>The Orientia tsutsugamushi genome reveals massive proliferation of conjugative type IV secretion system and host-cell interaction genes.</title>
        <authorList>
            <person name="Cho N.-H."/>
            <person name="Kim H.-R."/>
            <person name="Lee J.-H."/>
            <person name="Kim S.-Y."/>
            <person name="Kim J."/>
            <person name="Cha S."/>
            <person name="Kim S.-Y."/>
            <person name="Darby A.C."/>
            <person name="Fuxelius H.-H."/>
            <person name="Yin J."/>
            <person name="Kim J.H."/>
            <person name="Kim J."/>
            <person name="Lee S.J."/>
            <person name="Koh Y.-S."/>
            <person name="Jang W.-J."/>
            <person name="Park K.-H."/>
            <person name="Andersson S.G.E."/>
            <person name="Choi M.-S."/>
            <person name="Kim I.-S."/>
        </authorList>
    </citation>
    <scope>NUCLEOTIDE SEQUENCE [LARGE SCALE GENOMIC DNA]</scope>
    <source>
        <strain>Boryong</strain>
    </source>
</reference>
<protein>
    <recommendedName>
        <fullName evidence="1">NADH-quinone oxidoreductase subunit H</fullName>
        <ecNumber evidence="1">7.1.1.-</ecNumber>
    </recommendedName>
    <alternativeName>
        <fullName evidence="1">NADH dehydrogenase I subunit H</fullName>
    </alternativeName>
    <alternativeName>
        <fullName evidence="1">NDH-1 subunit H</fullName>
    </alternativeName>
</protein>
<sequence>MTICTDIIANGYDLKTLIYNSGVVSIKVIALIICLLLATAYLTFAERKVIAYMQLRVGPSLAGPFGLLQPIADAIKLVFKEPIIPAKADRKLFIIAPIITFVLSLLGWSVIPIDHDIVLSRIHIGGILFILAVTSLGVYGIIIAGWASNSKYAFLGAVRSAAQMISYELAMALSIVAVLIVTGEMDLIQIVEAQKTRPIWLTIMMLPLAVIYFISILAKTNRLPFDLPEAESELVAGYNVEYSSMAFAMFFLGEYANMILGSSLMTIMFLGGYLPPFNLEILTFIPGYIWFILKVSMVLFCFLWIRATLPRYRYDQLMYLGLKVFLPIVLAWIIVVSTILVYSNNLPIALETVLNK</sequence>
<feature type="chain" id="PRO_0000298834" description="NADH-quinone oxidoreductase subunit H">
    <location>
        <begin position="1"/>
        <end position="356"/>
    </location>
</feature>
<feature type="transmembrane region" description="Helical" evidence="1">
    <location>
        <begin position="22"/>
        <end position="42"/>
    </location>
</feature>
<feature type="transmembrane region" description="Helical" evidence="1">
    <location>
        <begin position="59"/>
        <end position="79"/>
    </location>
</feature>
<feature type="transmembrane region" description="Helical" evidence="1">
    <location>
        <begin position="93"/>
        <end position="113"/>
    </location>
</feature>
<feature type="transmembrane region" description="Helical" evidence="1">
    <location>
        <begin position="124"/>
        <end position="144"/>
    </location>
</feature>
<feature type="transmembrane region" description="Helical" evidence="1">
    <location>
        <begin position="171"/>
        <end position="191"/>
    </location>
</feature>
<feature type="transmembrane region" description="Helical" evidence="1">
    <location>
        <begin position="198"/>
        <end position="218"/>
    </location>
</feature>
<feature type="transmembrane region" description="Helical" evidence="1">
    <location>
        <begin position="240"/>
        <end position="260"/>
    </location>
</feature>
<feature type="transmembrane region" description="Helical" evidence="1">
    <location>
        <begin position="285"/>
        <end position="305"/>
    </location>
</feature>
<feature type="transmembrane region" description="Helical" evidence="1">
    <location>
        <begin position="321"/>
        <end position="341"/>
    </location>
</feature>
<gene>
    <name evidence="1" type="primary">nuoH</name>
    <name type="ordered locus">OTBS_2160</name>
</gene>
<dbReference type="EC" id="7.1.1.-" evidence="1"/>
<dbReference type="EMBL" id="AM494475">
    <property type="protein sequence ID" value="CAM81255.1"/>
    <property type="molecule type" value="Genomic_DNA"/>
</dbReference>
<dbReference type="RefSeq" id="WP_011945176.1">
    <property type="nucleotide sequence ID" value="NC_009488.1"/>
</dbReference>
<dbReference type="SMR" id="A5CFN5"/>
<dbReference type="KEGG" id="ots:OTBS_2160"/>
<dbReference type="eggNOG" id="COG1005">
    <property type="taxonomic scope" value="Bacteria"/>
</dbReference>
<dbReference type="HOGENOM" id="CLU_015134_0_1_5"/>
<dbReference type="Proteomes" id="UP000001565">
    <property type="component" value="Chromosome"/>
</dbReference>
<dbReference type="GO" id="GO:0005886">
    <property type="term" value="C:plasma membrane"/>
    <property type="evidence" value="ECO:0007669"/>
    <property type="project" value="UniProtKB-SubCell"/>
</dbReference>
<dbReference type="GO" id="GO:0003954">
    <property type="term" value="F:NADH dehydrogenase activity"/>
    <property type="evidence" value="ECO:0007669"/>
    <property type="project" value="TreeGrafter"/>
</dbReference>
<dbReference type="GO" id="GO:0016655">
    <property type="term" value="F:oxidoreductase activity, acting on NAD(P)H, quinone or similar compound as acceptor"/>
    <property type="evidence" value="ECO:0007669"/>
    <property type="project" value="UniProtKB-UniRule"/>
</dbReference>
<dbReference type="GO" id="GO:0048038">
    <property type="term" value="F:quinone binding"/>
    <property type="evidence" value="ECO:0007669"/>
    <property type="project" value="UniProtKB-KW"/>
</dbReference>
<dbReference type="GO" id="GO:0009060">
    <property type="term" value="P:aerobic respiration"/>
    <property type="evidence" value="ECO:0007669"/>
    <property type="project" value="TreeGrafter"/>
</dbReference>
<dbReference type="HAMAP" id="MF_01350">
    <property type="entry name" value="NDH1_NuoH"/>
    <property type="match status" value="1"/>
</dbReference>
<dbReference type="InterPro" id="IPR001694">
    <property type="entry name" value="NADH_UbQ_OxRdtase_su1/FPO"/>
</dbReference>
<dbReference type="InterPro" id="IPR018086">
    <property type="entry name" value="NADH_UbQ_OxRdtase_su1_CS"/>
</dbReference>
<dbReference type="NCBIfam" id="NF004741">
    <property type="entry name" value="PRK06076.1-2"/>
    <property type="match status" value="1"/>
</dbReference>
<dbReference type="NCBIfam" id="NF004745">
    <property type="entry name" value="PRK06076.1-6"/>
    <property type="match status" value="1"/>
</dbReference>
<dbReference type="PANTHER" id="PTHR11432">
    <property type="entry name" value="NADH DEHYDROGENASE SUBUNIT 1"/>
    <property type="match status" value="1"/>
</dbReference>
<dbReference type="PANTHER" id="PTHR11432:SF3">
    <property type="entry name" value="NADH-UBIQUINONE OXIDOREDUCTASE CHAIN 1"/>
    <property type="match status" value="1"/>
</dbReference>
<dbReference type="Pfam" id="PF00146">
    <property type="entry name" value="NADHdh"/>
    <property type="match status" value="1"/>
</dbReference>
<dbReference type="PROSITE" id="PS00667">
    <property type="entry name" value="COMPLEX1_ND1_1"/>
    <property type="match status" value="1"/>
</dbReference>
<dbReference type="PROSITE" id="PS00668">
    <property type="entry name" value="COMPLEX1_ND1_2"/>
    <property type="match status" value="1"/>
</dbReference>
<proteinExistence type="inferred from homology"/>